<sequence>MTVTIEIAVDIPCPAWTEAMPDAEARCGRLAAIALGAVDLPDGVVELSIVLADDATVQGLNRDWRGKDQPTNVLSFASLDDEDAPVVPGAPLLLGDVILAFETCAAEAHDQGKTLADHFSHLVVHGVLHLLGYDHMDDEEAAEMEALETTLLAALGIDDPYGEQ</sequence>
<accession>Q2VYQ6</accession>
<keyword id="KW-0963">Cytoplasm</keyword>
<keyword id="KW-0255">Endonuclease</keyword>
<keyword id="KW-0378">Hydrolase</keyword>
<keyword id="KW-0479">Metal-binding</keyword>
<keyword id="KW-0540">Nuclease</keyword>
<keyword id="KW-0690">Ribosome biogenesis</keyword>
<keyword id="KW-0698">rRNA processing</keyword>
<keyword id="KW-0862">Zinc</keyword>
<reference key="1">
    <citation type="journal article" date="2005" name="DNA Res.">
        <title>Complete genome sequence of the facultative anaerobic magnetotactic bacterium Magnetospirillum sp. strain AMB-1.</title>
        <authorList>
            <person name="Matsunaga T."/>
            <person name="Okamura Y."/>
            <person name="Fukuda Y."/>
            <person name="Wahyudi A.T."/>
            <person name="Murase Y."/>
            <person name="Takeyama H."/>
        </authorList>
    </citation>
    <scope>NUCLEOTIDE SEQUENCE [LARGE SCALE GENOMIC DNA]</scope>
    <source>
        <strain>ATCC 700264 / AMB-1</strain>
    </source>
</reference>
<feature type="chain" id="PRO_0000284237" description="Endoribonuclease YbeY">
    <location>
        <begin position="1"/>
        <end position="164"/>
    </location>
</feature>
<feature type="binding site" evidence="1">
    <location>
        <position position="125"/>
    </location>
    <ligand>
        <name>Zn(2+)</name>
        <dbReference type="ChEBI" id="CHEBI:29105"/>
        <note>catalytic</note>
    </ligand>
</feature>
<feature type="binding site" evidence="1">
    <location>
        <position position="129"/>
    </location>
    <ligand>
        <name>Zn(2+)</name>
        <dbReference type="ChEBI" id="CHEBI:29105"/>
        <note>catalytic</note>
    </ligand>
</feature>
<feature type="binding site" evidence="1">
    <location>
        <position position="135"/>
    </location>
    <ligand>
        <name>Zn(2+)</name>
        <dbReference type="ChEBI" id="CHEBI:29105"/>
        <note>catalytic</note>
    </ligand>
</feature>
<name>YBEY_PARM1</name>
<evidence type="ECO:0000255" key="1">
    <source>
        <dbReference type="HAMAP-Rule" id="MF_00009"/>
    </source>
</evidence>
<proteinExistence type="inferred from homology"/>
<comment type="function">
    <text evidence="1">Single strand-specific metallo-endoribonuclease involved in late-stage 70S ribosome quality control and in maturation of the 3' terminus of the 16S rRNA.</text>
</comment>
<comment type="cofactor">
    <cofactor evidence="1">
        <name>Zn(2+)</name>
        <dbReference type="ChEBI" id="CHEBI:29105"/>
    </cofactor>
    <text evidence="1">Binds 1 zinc ion.</text>
</comment>
<comment type="subcellular location">
    <subcellularLocation>
        <location evidence="1">Cytoplasm</location>
    </subcellularLocation>
</comment>
<comment type="similarity">
    <text evidence="1">Belongs to the endoribonuclease YbeY family.</text>
</comment>
<organism>
    <name type="scientific">Paramagnetospirillum magneticum (strain ATCC 700264 / AMB-1)</name>
    <name type="common">Magnetospirillum magneticum</name>
    <dbReference type="NCBI Taxonomy" id="342108"/>
    <lineage>
        <taxon>Bacteria</taxon>
        <taxon>Pseudomonadati</taxon>
        <taxon>Pseudomonadota</taxon>
        <taxon>Alphaproteobacteria</taxon>
        <taxon>Rhodospirillales</taxon>
        <taxon>Magnetospirillaceae</taxon>
        <taxon>Paramagnetospirillum</taxon>
    </lineage>
</organism>
<dbReference type="EC" id="3.1.-.-" evidence="1"/>
<dbReference type="EMBL" id="AP007255">
    <property type="protein sequence ID" value="BAE53269.1"/>
    <property type="molecule type" value="Genomic_DNA"/>
</dbReference>
<dbReference type="RefSeq" id="WP_011386809.1">
    <property type="nucleotide sequence ID" value="NC_007626.1"/>
</dbReference>
<dbReference type="SMR" id="Q2VYQ6"/>
<dbReference type="STRING" id="342108.amb4465"/>
<dbReference type="KEGG" id="mag:amb4465"/>
<dbReference type="HOGENOM" id="CLU_106710_0_0_5"/>
<dbReference type="OrthoDB" id="9807740at2"/>
<dbReference type="Proteomes" id="UP000007058">
    <property type="component" value="Chromosome"/>
</dbReference>
<dbReference type="GO" id="GO:0005737">
    <property type="term" value="C:cytoplasm"/>
    <property type="evidence" value="ECO:0007669"/>
    <property type="project" value="UniProtKB-SubCell"/>
</dbReference>
<dbReference type="GO" id="GO:0004222">
    <property type="term" value="F:metalloendopeptidase activity"/>
    <property type="evidence" value="ECO:0007669"/>
    <property type="project" value="InterPro"/>
</dbReference>
<dbReference type="GO" id="GO:0004521">
    <property type="term" value="F:RNA endonuclease activity"/>
    <property type="evidence" value="ECO:0007669"/>
    <property type="project" value="UniProtKB-UniRule"/>
</dbReference>
<dbReference type="GO" id="GO:0008270">
    <property type="term" value="F:zinc ion binding"/>
    <property type="evidence" value="ECO:0007669"/>
    <property type="project" value="UniProtKB-UniRule"/>
</dbReference>
<dbReference type="GO" id="GO:0006364">
    <property type="term" value="P:rRNA processing"/>
    <property type="evidence" value="ECO:0007669"/>
    <property type="project" value="UniProtKB-UniRule"/>
</dbReference>
<dbReference type="Gene3D" id="3.40.390.30">
    <property type="entry name" value="Metalloproteases ('zincins'), catalytic domain"/>
    <property type="match status" value="1"/>
</dbReference>
<dbReference type="HAMAP" id="MF_00009">
    <property type="entry name" value="Endoribonucl_YbeY"/>
    <property type="match status" value="1"/>
</dbReference>
<dbReference type="InterPro" id="IPR023091">
    <property type="entry name" value="MetalPrtase_cat_dom_sf_prd"/>
</dbReference>
<dbReference type="InterPro" id="IPR002036">
    <property type="entry name" value="YbeY"/>
</dbReference>
<dbReference type="InterPro" id="IPR020549">
    <property type="entry name" value="YbeY_CS"/>
</dbReference>
<dbReference type="NCBIfam" id="TIGR00043">
    <property type="entry name" value="rRNA maturation RNase YbeY"/>
    <property type="match status" value="1"/>
</dbReference>
<dbReference type="PANTHER" id="PTHR46986">
    <property type="entry name" value="ENDORIBONUCLEASE YBEY, CHLOROPLASTIC"/>
    <property type="match status" value="1"/>
</dbReference>
<dbReference type="PANTHER" id="PTHR46986:SF1">
    <property type="entry name" value="ENDORIBONUCLEASE YBEY, CHLOROPLASTIC"/>
    <property type="match status" value="1"/>
</dbReference>
<dbReference type="Pfam" id="PF02130">
    <property type="entry name" value="YbeY"/>
    <property type="match status" value="1"/>
</dbReference>
<dbReference type="SUPFAM" id="SSF55486">
    <property type="entry name" value="Metalloproteases ('zincins'), catalytic domain"/>
    <property type="match status" value="1"/>
</dbReference>
<dbReference type="PROSITE" id="PS01306">
    <property type="entry name" value="UPF0054"/>
    <property type="match status" value="1"/>
</dbReference>
<gene>
    <name evidence="1" type="primary">ybeY</name>
    <name type="ordered locus">amb4465</name>
</gene>
<protein>
    <recommendedName>
        <fullName evidence="1">Endoribonuclease YbeY</fullName>
        <ecNumber evidence="1">3.1.-.-</ecNumber>
    </recommendedName>
</protein>